<keyword id="KW-0067">ATP-binding</keyword>
<keyword id="KW-0436">Ligase</keyword>
<keyword id="KW-0547">Nucleotide-binding</keyword>
<keyword id="KW-0648">Protein biosynthesis</keyword>
<organism>
    <name type="scientific">Prosthecochloris aestuarii (strain DSM 271 / SK 413)</name>
    <dbReference type="NCBI Taxonomy" id="290512"/>
    <lineage>
        <taxon>Bacteria</taxon>
        <taxon>Pseudomonadati</taxon>
        <taxon>Chlorobiota</taxon>
        <taxon>Chlorobiia</taxon>
        <taxon>Chlorobiales</taxon>
        <taxon>Chlorobiaceae</taxon>
        <taxon>Prosthecochloris</taxon>
    </lineage>
</organism>
<reference key="1">
    <citation type="submission" date="2008-06" db="EMBL/GenBank/DDBJ databases">
        <title>Complete sequence of chromosome of Prosthecochloris aestuarii DSM 271.</title>
        <authorList>
            <consortium name="US DOE Joint Genome Institute"/>
            <person name="Lucas S."/>
            <person name="Copeland A."/>
            <person name="Lapidus A."/>
            <person name="Glavina del Rio T."/>
            <person name="Dalin E."/>
            <person name="Tice H."/>
            <person name="Bruce D."/>
            <person name="Goodwin L."/>
            <person name="Pitluck S."/>
            <person name="Schmutz J."/>
            <person name="Larimer F."/>
            <person name="Land M."/>
            <person name="Hauser L."/>
            <person name="Kyrpides N."/>
            <person name="Anderson I."/>
            <person name="Liu Z."/>
            <person name="Li T."/>
            <person name="Zhao F."/>
            <person name="Overmann J."/>
            <person name="Bryant D.A."/>
            <person name="Richardson P."/>
        </authorList>
    </citation>
    <scope>NUCLEOTIDE SEQUENCE [LARGE SCALE GENOMIC DNA]</scope>
    <source>
        <strain>DSM 271 / SK 413</strain>
    </source>
</reference>
<name>GATB_PROA2</name>
<comment type="function">
    <text evidence="1">Allows the formation of correctly charged Asn-tRNA(Asn) or Gln-tRNA(Gln) through the transamidation of misacylated Asp-tRNA(Asn) or Glu-tRNA(Gln) in organisms which lack either or both of asparaginyl-tRNA or glutaminyl-tRNA synthetases. The reaction takes place in the presence of glutamine and ATP through an activated phospho-Asp-tRNA(Asn) or phospho-Glu-tRNA(Gln).</text>
</comment>
<comment type="catalytic activity">
    <reaction evidence="1">
        <text>L-glutamyl-tRNA(Gln) + L-glutamine + ATP + H2O = L-glutaminyl-tRNA(Gln) + L-glutamate + ADP + phosphate + H(+)</text>
        <dbReference type="Rhea" id="RHEA:17521"/>
        <dbReference type="Rhea" id="RHEA-COMP:9681"/>
        <dbReference type="Rhea" id="RHEA-COMP:9684"/>
        <dbReference type="ChEBI" id="CHEBI:15377"/>
        <dbReference type="ChEBI" id="CHEBI:15378"/>
        <dbReference type="ChEBI" id="CHEBI:29985"/>
        <dbReference type="ChEBI" id="CHEBI:30616"/>
        <dbReference type="ChEBI" id="CHEBI:43474"/>
        <dbReference type="ChEBI" id="CHEBI:58359"/>
        <dbReference type="ChEBI" id="CHEBI:78520"/>
        <dbReference type="ChEBI" id="CHEBI:78521"/>
        <dbReference type="ChEBI" id="CHEBI:456216"/>
    </reaction>
</comment>
<comment type="catalytic activity">
    <reaction evidence="1">
        <text>L-aspartyl-tRNA(Asn) + L-glutamine + ATP + H2O = L-asparaginyl-tRNA(Asn) + L-glutamate + ADP + phosphate + 2 H(+)</text>
        <dbReference type="Rhea" id="RHEA:14513"/>
        <dbReference type="Rhea" id="RHEA-COMP:9674"/>
        <dbReference type="Rhea" id="RHEA-COMP:9677"/>
        <dbReference type="ChEBI" id="CHEBI:15377"/>
        <dbReference type="ChEBI" id="CHEBI:15378"/>
        <dbReference type="ChEBI" id="CHEBI:29985"/>
        <dbReference type="ChEBI" id="CHEBI:30616"/>
        <dbReference type="ChEBI" id="CHEBI:43474"/>
        <dbReference type="ChEBI" id="CHEBI:58359"/>
        <dbReference type="ChEBI" id="CHEBI:78515"/>
        <dbReference type="ChEBI" id="CHEBI:78516"/>
        <dbReference type="ChEBI" id="CHEBI:456216"/>
    </reaction>
</comment>
<comment type="subunit">
    <text evidence="1">Heterotrimer of A, B and C subunits.</text>
</comment>
<comment type="similarity">
    <text evidence="1">Belongs to the GatB/GatE family. GatB subfamily.</text>
</comment>
<feature type="chain" id="PRO_1000095233" description="Aspartyl/glutamyl-tRNA(Asn/Gln) amidotransferase subunit B">
    <location>
        <begin position="1"/>
        <end position="481"/>
    </location>
</feature>
<proteinExistence type="inferred from homology"/>
<evidence type="ECO:0000255" key="1">
    <source>
        <dbReference type="HAMAP-Rule" id="MF_00121"/>
    </source>
</evidence>
<dbReference type="EC" id="6.3.5.-" evidence="1"/>
<dbReference type="EMBL" id="CP001108">
    <property type="protein sequence ID" value="ACF47090.1"/>
    <property type="molecule type" value="Genomic_DNA"/>
</dbReference>
<dbReference type="RefSeq" id="WP_012506622.1">
    <property type="nucleotide sequence ID" value="NC_011059.1"/>
</dbReference>
<dbReference type="SMR" id="B4S5P3"/>
<dbReference type="STRING" id="290512.Paes_2080"/>
<dbReference type="KEGG" id="paa:Paes_2080"/>
<dbReference type="eggNOG" id="COG0064">
    <property type="taxonomic scope" value="Bacteria"/>
</dbReference>
<dbReference type="HOGENOM" id="CLU_019240_0_0_10"/>
<dbReference type="Proteomes" id="UP000002725">
    <property type="component" value="Chromosome"/>
</dbReference>
<dbReference type="GO" id="GO:0050566">
    <property type="term" value="F:asparaginyl-tRNA synthase (glutamine-hydrolyzing) activity"/>
    <property type="evidence" value="ECO:0007669"/>
    <property type="project" value="RHEA"/>
</dbReference>
<dbReference type="GO" id="GO:0005524">
    <property type="term" value="F:ATP binding"/>
    <property type="evidence" value="ECO:0007669"/>
    <property type="project" value="UniProtKB-KW"/>
</dbReference>
<dbReference type="GO" id="GO:0050567">
    <property type="term" value="F:glutaminyl-tRNA synthase (glutamine-hydrolyzing) activity"/>
    <property type="evidence" value="ECO:0007669"/>
    <property type="project" value="UniProtKB-UniRule"/>
</dbReference>
<dbReference type="GO" id="GO:0070681">
    <property type="term" value="P:glutaminyl-tRNAGln biosynthesis via transamidation"/>
    <property type="evidence" value="ECO:0007669"/>
    <property type="project" value="TreeGrafter"/>
</dbReference>
<dbReference type="GO" id="GO:0006412">
    <property type="term" value="P:translation"/>
    <property type="evidence" value="ECO:0007669"/>
    <property type="project" value="UniProtKB-UniRule"/>
</dbReference>
<dbReference type="FunFam" id="1.10.10.410:FF:000001">
    <property type="entry name" value="Aspartyl/glutamyl-tRNA(Asn/Gln) amidotransferase subunit B"/>
    <property type="match status" value="1"/>
</dbReference>
<dbReference type="FunFam" id="1.10.150.380:FF:000001">
    <property type="entry name" value="Aspartyl/glutamyl-tRNA(Asn/Gln) amidotransferase subunit B"/>
    <property type="match status" value="1"/>
</dbReference>
<dbReference type="Gene3D" id="1.10.10.410">
    <property type="match status" value="1"/>
</dbReference>
<dbReference type="Gene3D" id="1.10.150.380">
    <property type="entry name" value="GatB domain, N-terminal subdomain"/>
    <property type="match status" value="1"/>
</dbReference>
<dbReference type="HAMAP" id="MF_00121">
    <property type="entry name" value="GatB"/>
    <property type="match status" value="1"/>
</dbReference>
<dbReference type="InterPro" id="IPR017959">
    <property type="entry name" value="Asn/Gln-tRNA_amidoTrfase_suB/E"/>
</dbReference>
<dbReference type="InterPro" id="IPR006075">
    <property type="entry name" value="Asn/Gln-tRNA_Trfase_suB/E_cat"/>
</dbReference>
<dbReference type="InterPro" id="IPR018027">
    <property type="entry name" value="Asn/Gln_amidotransferase"/>
</dbReference>
<dbReference type="InterPro" id="IPR003789">
    <property type="entry name" value="Asn/Gln_tRNA_amidoTrase-B-like"/>
</dbReference>
<dbReference type="InterPro" id="IPR004413">
    <property type="entry name" value="GatB"/>
</dbReference>
<dbReference type="InterPro" id="IPR042114">
    <property type="entry name" value="GatB_C_1"/>
</dbReference>
<dbReference type="InterPro" id="IPR023168">
    <property type="entry name" value="GatB_Yqey_C_2"/>
</dbReference>
<dbReference type="InterPro" id="IPR014746">
    <property type="entry name" value="Gln_synth/guanido_kin_cat_dom"/>
</dbReference>
<dbReference type="NCBIfam" id="TIGR00133">
    <property type="entry name" value="gatB"/>
    <property type="match status" value="1"/>
</dbReference>
<dbReference type="NCBIfam" id="NF004012">
    <property type="entry name" value="PRK05477.1-2"/>
    <property type="match status" value="1"/>
</dbReference>
<dbReference type="NCBIfam" id="NF004014">
    <property type="entry name" value="PRK05477.1-4"/>
    <property type="match status" value="1"/>
</dbReference>
<dbReference type="NCBIfam" id="NF004015">
    <property type="entry name" value="PRK05477.1-5"/>
    <property type="match status" value="1"/>
</dbReference>
<dbReference type="PANTHER" id="PTHR11659">
    <property type="entry name" value="GLUTAMYL-TRNA GLN AMIDOTRANSFERASE SUBUNIT B MITOCHONDRIAL AND PROKARYOTIC PET112-RELATED"/>
    <property type="match status" value="1"/>
</dbReference>
<dbReference type="PANTHER" id="PTHR11659:SF0">
    <property type="entry name" value="GLUTAMYL-TRNA(GLN) AMIDOTRANSFERASE SUBUNIT B, MITOCHONDRIAL"/>
    <property type="match status" value="1"/>
</dbReference>
<dbReference type="Pfam" id="PF02934">
    <property type="entry name" value="GatB_N"/>
    <property type="match status" value="1"/>
</dbReference>
<dbReference type="Pfam" id="PF02637">
    <property type="entry name" value="GatB_Yqey"/>
    <property type="match status" value="1"/>
</dbReference>
<dbReference type="SMART" id="SM00845">
    <property type="entry name" value="GatB_Yqey"/>
    <property type="match status" value="1"/>
</dbReference>
<dbReference type="SUPFAM" id="SSF89095">
    <property type="entry name" value="GatB/YqeY motif"/>
    <property type="match status" value="1"/>
</dbReference>
<dbReference type="SUPFAM" id="SSF55931">
    <property type="entry name" value="Glutamine synthetase/guanido kinase"/>
    <property type="match status" value="1"/>
</dbReference>
<protein>
    <recommendedName>
        <fullName evidence="1">Aspartyl/glutamyl-tRNA(Asn/Gln) amidotransferase subunit B</fullName>
        <shortName evidence="1">Asp/Glu-ADT subunit B</shortName>
        <ecNumber evidence="1">6.3.5.-</ecNumber>
    </recommendedName>
</protein>
<gene>
    <name evidence="1" type="primary">gatB</name>
    <name type="ordered locus">Paes_2080</name>
</gene>
<accession>B4S5P3</accession>
<sequence length="481" mass="53398">MSYELVVGLEVHCQLNTNSKAFCGCSTEFGKPANTNVCPVCLALPGALPVLNQRVVDDAIKLGMSTGCSIAPHSVLARKNYFYPDLPKGYQISQFEEPICLEGCLSIDAGEGQRDIRLIRIHIEEDAGKSIHDIGDDTFIDANRSGVPLLEIVSYPDIRSSKEASAYLQKLRQIVKYLGISDGNMEEGSLRCDANVSMRPRGESEYGTRTEIKNMNSFKSVEKAIEYEAQRHIDVLEAGGTIVQETRLWDADKLETRSMRGKEFSHDYRYFPDPDLVPIAVDDAMLDRLRKELPEFPEARAARFVEEYDIPPYDAGVLTAEREIADYFEETVRVSGDGKAASNWVMGEVLRTLKEKYIPIASFTISPERLGELIGLIAKGTISNTIAKQVFEKMQELDEGPQEIVRKEGLAQVSDTGAIEGVVQEIIDANPAQVEQYRSGKTRIFGFFVGQCMKEMKGKANPAVVNDILKQKLDEGMTGDA</sequence>